<gene>
    <name evidence="2" type="primary">kefC</name>
    <name type="synonym">trkC</name>
    <name type="ordered locus">b0047</name>
    <name type="ordered locus">JW0046</name>
</gene>
<dbReference type="EMBL" id="X56742">
    <property type="protein sequence ID" value="CAA40066.1"/>
    <property type="molecule type" value="Genomic_DNA"/>
</dbReference>
<dbReference type="EMBL" id="U00096">
    <property type="protein sequence ID" value="AAC73158.1"/>
    <property type="molecule type" value="Genomic_DNA"/>
</dbReference>
<dbReference type="EMBL" id="AP009048">
    <property type="protein sequence ID" value="BAB96615.1"/>
    <property type="molecule type" value="Genomic_DNA"/>
</dbReference>
<dbReference type="EMBL" id="J01609">
    <property type="status" value="NOT_ANNOTATED_CDS"/>
    <property type="molecule type" value="Genomic_DNA"/>
</dbReference>
<dbReference type="PIR" id="S40568">
    <property type="entry name" value="QQECRD"/>
</dbReference>
<dbReference type="RefSeq" id="NP_414589.1">
    <property type="nucleotide sequence ID" value="NC_000913.3"/>
</dbReference>
<dbReference type="RefSeq" id="WP_000377098.1">
    <property type="nucleotide sequence ID" value="NZ_STEB01000010.1"/>
</dbReference>
<dbReference type="PDB" id="3EYW">
    <property type="method" value="X-ray"/>
    <property type="resolution" value="2.40 A"/>
    <property type="chains" value="A/B=401-620"/>
</dbReference>
<dbReference type="PDB" id="3L9W">
    <property type="method" value="X-ray"/>
    <property type="resolution" value="1.75 A"/>
    <property type="chains" value="A/B=401-620"/>
</dbReference>
<dbReference type="PDB" id="3L9X">
    <property type="method" value="X-ray"/>
    <property type="resolution" value="2.10 A"/>
    <property type="chains" value="A/B=401-620"/>
</dbReference>
<dbReference type="PDB" id="8BXG">
    <property type="method" value="EM"/>
    <property type="resolution" value="3.16 A"/>
    <property type="chains" value="A/B=1-561"/>
</dbReference>
<dbReference type="PDB" id="8BY2">
    <property type="method" value="EM"/>
    <property type="resolution" value="3.18 A"/>
    <property type="chains" value="A/B=1-561"/>
</dbReference>
<dbReference type="PDB" id="9EMB">
    <property type="method" value="EM"/>
    <property type="resolution" value="2.98 A"/>
    <property type="chains" value="A/B=1-560"/>
</dbReference>
<dbReference type="PDBsum" id="3EYW"/>
<dbReference type="PDBsum" id="3L9W"/>
<dbReference type="PDBsum" id="3L9X"/>
<dbReference type="PDBsum" id="8BXG"/>
<dbReference type="PDBsum" id="8BY2"/>
<dbReference type="PDBsum" id="9EMB"/>
<dbReference type="EMDB" id="EMD-16318"/>
<dbReference type="EMDB" id="EMD-16319"/>
<dbReference type="EMDB" id="EMD-19816"/>
<dbReference type="SMR" id="P03819"/>
<dbReference type="BioGRID" id="4262200">
    <property type="interactions" value="8"/>
</dbReference>
<dbReference type="ComplexPortal" id="CPX-2543">
    <property type="entry name" value="Glutathione-regulated potassium-efflux system KefC-KefF complex"/>
</dbReference>
<dbReference type="DIP" id="DIP-10072N"/>
<dbReference type="FunCoup" id="P03819">
    <property type="interactions" value="740"/>
</dbReference>
<dbReference type="IntAct" id="P03819">
    <property type="interactions" value="3"/>
</dbReference>
<dbReference type="STRING" id="511145.b0047"/>
<dbReference type="TCDB" id="2.A.37.1.1">
    <property type="family name" value="the monovalent cation:proton antiporter-2 (cpa2) family"/>
</dbReference>
<dbReference type="jPOST" id="P03819"/>
<dbReference type="PaxDb" id="511145-b0047"/>
<dbReference type="EnsemblBacteria" id="AAC73158">
    <property type="protein sequence ID" value="AAC73158"/>
    <property type="gene ID" value="b0047"/>
</dbReference>
<dbReference type="GeneID" id="944773"/>
<dbReference type="KEGG" id="ecj:JW0046"/>
<dbReference type="KEGG" id="eco:b0047"/>
<dbReference type="KEGG" id="ecoc:C3026_00245"/>
<dbReference type="PATRIC" id="fig|1411691.4.peg.2236"/>
<dbReference type="EchoBASE" id="EB0516"/>
<dbReference type="eggNOG" id="COG0475">
    <property type="taxonomic scope" value="Bacteria"/>
</dbReference>
<dbReference type="eggNOG" id="COG1226">
    <property type="taxonomic scope" value="Bacteria"/>
</dbReference>
<dbReference type="HOGENOM" id="CLU_005126_9_3_6"/>
<dbReference type="InParanoid" id="P03819"/>
<dbReference type="OMA" id="TFIGANQ"/>
<dbReference type="OrthoDB" id="9781411at2"/>
<dbReference type="PhylomeDB" id="P03819"/>
<dbReference type="BioCyc" id="EcoCyc:KEFC-MONOMER"/>
<dbReference type="BioCyc" id="MetaCyc:KEFC-MONOMER"/>
<dbReference type="PRO" id="PR:P03819"/>
<dbReference type="Proteomes" id="UP000000625">
    <property type="component" value="Chromosome"/>
</dbReference>
<dbReference type="GO" id="GO:0016020">
    <property type="term" value="C:membrane"/>
    <property type="evidence" value="ECO:0000314"/>
    <property type="project" value="EcoCyc"/>
</dbReference>
<dbReference type="GO" id="GO:0005886">
    <property type="term" value="C:plasma membrane"/>
    <property type="evidence" value="ECO:0000314"/>
    <property type="project" value="EcoCyc"/>
</dbReference>
<dbReference type="GO" id="GO:1903103">
    <property type="term" value="C:potassium:proton antiporter complex"/>
    <property type="evidence" value="ECO:0000353"/>
    <property type="project" value="ComplexPortal"/>
</dbReference>
<dbReference type="GO" id="GO:0019899">
    <property type="term" value="F:enzyme binding"/>
    <property type="evidence" value="ECO:0000315"/>
    <property type="project" value="EcoCyc"/>
</dbReference>
<dbReference type="GO" id="GO:0015503">
    <property type="term" value="F:glutathione-regulated potassium exporter activity"/>
    <property type="evidence" value="ECO:0000315"/>
    <property type="project" value="EcoCyc"/>
</dbReference>
<dbReference type="GO" id="GO:0000166">
    <property type="term" value="F:nucleotide binding"/>
    <property type="evidence" value="ECO:0007669"/>
    <property type="project" value="UniProtKB-KW"/>
</dbReference>
<dbReference type="GO" id="GO:0042803">
    <property type="term" value="F:protein homodimerization activity"/>
    <property type="evidence" value="ECO:0000314"/>
    <property type="project" value="EcoCyc"/>
</dbReference>
<dbReference type="GO" id="GO:0015643">
    <property type="term" value="F:toxic substance binding"/>
    <property type="evidence" value="ECO:0000314"/>
    <property type="project" value="EcoCyc"/>
</dbReference>
<dbReference type="GO" id="GO:0051454">
    <property type="term" value="P:intracellular pH elevation"/>
    <property type="evidence" value="ECO:0000303"/>
    <property type="project" value="ComplexPortal"/>
</dbReference>
<dbReference type="GO" id="GO:0006813">
    <property type="term" value="P:potassium ion transport"/>
    <property type="evidence" value="ECO:0000314"/>
    <property type="project" value="EcoliWiki"/>
</dbReference>
<dbReference type="GO" id="GO:1902600">
    <property type="term" value="P:proton transmembrane transport"/>
    <property type="evidence" value="ECO:0007669"/>
    <property type="project" value="InterPro"/>
</dbReference>
<dbReference type="GO" id="GO:0051453">
    <property type="term" value="P:regulation of intracellular pH"/>
    <property type="evidence" value="ECO:0000303"/>
    <property type="project" value="ComplexPortal"/>
</dbReference>
<dbReference type="GO" id="GO:0006885">
    <property type="term" value="P:regulation of pH"/>
    <property type="evidence" value="ECO:0000314"/>
    <property type="project" value="EcoliWiki"/>
</dbReference>
<dbReference type="GO" id="GO:0042542">
    <property type="term" value="P:response to hydrogen peroxide"/>
    <property type="evidence" value="ECO:0000315"/>
    <property type="project" value="EcoCyc"/>
</dbReference>
<dbReference type="GO" id="GO:0051595">
    <property type="term" value="P:response to methylglyoxal"/>
    <property type="evidence" value="ECO:0000315"/>
    <property type="project" value="EcoCyc"/>
</dbReference>
<dbReference type="GO" id="GO:0009636">
    <property type="term" value="P:response to toxic substance"/>
    <property type="evidence" value="ECO:0000315"/>
    <property type="project" value="EcoCyc"/>
</dbReference>
<dbReference type="FunFam" id="1.20.1530.20:FF:000001">
    <property type="entry name" value="Glutathione-regulated potassium-efflux system protein KefB"/>
    <property type="match status" value="1"/>
</dbReference>
<dbReference type="FunFam" id="3.40.50.720:FF:000036">
    <property type="entry name" value="Glutathione-regulated potassium-efflux system protein KefB"/>
    <property type="match status" value="1"/>
</dbReference>
<dbReference type="Gene3D" id="1.20.1530.20">
    <property type="match status" value="1"/>
</dbReference>
<dbReference type="Gene3D" id="3.40.50.720">
    <property type="entry name" value="NAD(P)-binding Rossmann-like Domain"/>
    <property type="match status" value="1"/>
</dbReference>
<dbReference type="HAMAP" id="MF_01413">
    <property type="entry name" value="K_H_efflux_KefC"/>
    <property type="match status" value="1"/>
</dbReference>
<dbReference type="InterPro" id="IPR006153">
    <property type="entry name" value="Cation/H_exchanger_TM"/>
</dbReference>
<dbReference type="InterPro" id="IPR004771">
    <property type="entry name" value="K/H_exchanger"/>
</dbReference>
<dbReference type="InterPro" id="IPR023941">
    <property type="entry name" value="K_H_efflux_KefC"/>
</dbReference>
<dbReference type="InterPro" id="IPR006036">
    <property type="entry name" value="K_uptake_TrkA"/>
</dbReference>
<dbReference type="InterPro" id="IPR038770">
    <property type="entry name" value="Na+/solute_symporter_sf"/>
</dbReference>
<dbReference type="InterPro" id="IPR036291">
    <property type="entry name" value="NAD(P)-bd_dom_sf"/>
</dbReference>
<dbReference type="InterPro" id="IPR003148">
    <property type="entry name" value="RCK_N"/>
</dbReference>
<dbReference type="NCBIfam" id="TIGR00932">
    <property type="entry name" value="2a37"/>
    <property type="match status" value="1"/>
</dbReference>
<dbReference type="NCBIfam" id="NF002924">
    <property type="entry name" value="PRK03562.1"/>
    <property type="match status" value="1"/>
</dbReference>
<dbReference type="PANTHER" id="PTHR46157:SF3">
    <property type="entry name" value="GLUTATHIONE-REGULATED POTASSIUM-EFFLUX SYSTEM PROTEIN KEFC"/>
    <property type="match status" value="1"/>
</dbReference>
<dbReference type="PANTHER" id="PTHR46157">
    <property type="entry name" value="K(+) EFFLUX ANTIPORTER 3, CHLOROPLASTIC"/>
    <property type="match status" value="1"/>
</dbReference>
<dbReference type="Pfam" id="PF00999">
    <property type="entry name" value="Na_H_Exchanger"/>
    <property type="match status" value="1"/>
</dbReference>
<dbReference type="Pfam" id="PF02254">
    <property type="entry name" value="TrkA_N"/>
    <property type="match status" value="1"/>
</dbReference>
<dbReference type="PRINTS" id="PR00335">
    <property type="entry name" value="KUPTAKETRKA"/>
</dbReference>
<dbReference type="SUPFAM" id="SSF51735">
    <property type="entry name" value="NAD(P)-binding Rossmann-fold domains"/>
    <property type="match status" value="1"/>
</dbReference>
<dbReference type="PROSITE" id="PS51201">
    <property type="entry name" value="RCK_N"/>
    <property type="match status" value="1"/>
</dbReference>
<comment type="function">
    <text evidence="2 6 9 10">Pore-forming subunit of a potassium efflux system that confers protection against electrophiles. Catalyzes K(+)/H(+) antiport. Can also export rubidium, lithium and sodium.</text>
</comment>
<comment type="activity regulation">
    <text evidence="6 9 10">Inhibited by glutathione. This inhibition is increased by NADH. Activated by adducts between glutathione and electrophiles.</text>
</comment>
<comment type="subunit">
    <text evidence="2 6 7 9">Homodimer. Interacts with the regulatory subunit KefF, forming a heterotetramer with 2:2 stoichiometry. Interaction with KefF is required for optimal activity. The active antiporter may be formed by the heterotetramer, or by an octamer.</text>
</comment>
<comment type="interaction">
    <interactant intactId="EBI-547193">
        <id>P03819</id>
    </interactant>
    <interactant intactId="EBI-562116">
        <id>P0A754</id>
        <label>kefF</label>
    </interactant>
    <organismsDiffer>false</organismsDiffer>
    <experiments>2</experiments>
</comment>
<comment type="subcellular location">
    <subcellularLocation>
        <location evidence="2 5 8">Cell inner membrane</location>
        <topology evidence="2 5 8">Multi-pass membrane protein</topology>
    </subcellularLocation>
</comment>
<comment type="domain">
    <text evidence="9">The cytoplasmic RCK N-terminal domain regulates channel activity. It binds glutathione, resulting in inhibition of potassium efflux. In contrast, binding of the adducts formed between glutathione and electrophiles leads to activation of potassium efflux. Is expected to bind NADH, but X-ray crystallography shows bound AMP, and it would be difficult to accommodate NADH in this binding site (PubMed:21041667).</text>
</comment>
<comment type="similarity">
    <text evidence="2">Belongs to the monovalent cation:proton antiporter 2 (CPA2) transporter (TC 2.A.37) family. KefC subfamily.</text>
</comment>
<protein>
    <recommendedName>
        <fullName evidence="2">Glutathione-regulated potassium-efflux system protein KefC</fullName>
    </recommendedName>
    <alternativeName>
        <fullName evidence="2">K(+)/H(+) antiporter</fullName>
    </alternativeName>
</protein>
<reference key="1">
    <citation type="journal article" date="1991" name="Mol. Microbiol.">
        <title>The cloning and DNA sequence of the gene for the glutathione-regulated potassium-efflux system KefC of Escherichia coli.</title>
        <authorList>
            <person name="Munro A.W."/>
            <person name="Ritchie G.Y."/>
            <person name="Lamb A.J."/>
            <person name="Douglas R.M."/>
            <person name="Booth I.R."/>
        </authorList>
    </citation>
    <scope>NUCLEOTIDE SEQUENCE [GENOMIC DNA]</scope>
    <scope>SUBCELLULAR LOCATION</scope>
    <source>
        <strain>K12 / CS520</strain>
    </source>
</reference>
<reference key="2">
    <citation type="journal article" date="1992" name="Nucleic Acids Res.">
        <title>Systematic sequencing of the Escherichia coli genome: analysis of the 0-2.4 min region.</title>
        <authorList>
            <person name="Yura T."/>
            <person name="Mori H."/>
            <person name="Nagai H."/>
            <person name="Nagata T."/>
            <person name="Ishihama A."/>
            <person name="Fujita N."/>
            <person name="Isono K."/>
            <person name="Mizobuchi K."/>
            <person name="Nakata A."/>
        </authorList>
    </citation>
    <scope>NUCLEOTIDE SEQUENCE [LARGE SCALE GENOMIC DNA]</scope>
    <source>
        <strain>K12</strain>
    </source>
</reference>
<reference key="3">
    <citation type="journal article" date="1997" name="Science">
        <title>The complete genome sequence of Escherichia coli K-12.</title>
        <authorList>
            <person name="Blattner F.R."/>
            <person name="Plunkett G. III"/>
            <person name="Bloch C.A."/>
            <person name="Perna N.T."/>
            <person name="Burland V."/>
            <person name="Riley M."/>
            <person name="Collado-Vides J."/>
            <person name="Glasner J.D."/>
            <person name="Rode C.K."/>
            <person name="Mayhew G.F."/>
            <person name="Gregor J."/>
            <person name="Davis N.W."/>
            <person name="Kirkpatrick H.A."/>
            <person name="Goeden M.A."/>
            <person name="Rose D.J."/>
            <person name="Mau B."/>
            <person name="Shao Y."/>
        </authorList>
    </citation>
    <scope>NUCLEOTIDE SEQUENCE [LARGE SCALE GENOMIC DNA]</scope>
    <source>
        <strain>K12 / MG1655 / ATCC 47076</strain>
    </source>
</reference>
<reference key="4">
    <citation type="journal article" date="2006" name="Mol. Syst. Biol.">
        <title>Highly accurate genome sequences of Escherichia coli K-12 strains MG1655 and W3110.</title>
        <authorList>
            <person name="Hayashi K."/>
            <person name="Morooka N."/>
            <person name="Yamamoto Y."/>
            <person name="Fujita K."/>
            <person name="Isono K."/>
            <person name="Choi S."/>
            <person name="Ohtsubo E."/>
            <person name="Baba T."/>
            <person name="Wanner B.L."/>
            <person name="Mori H."/>
            <person name="Horiuchi T."/>
        </authorList>
    </citation>
    <scope>NUCLEOTIDE SEQUENCE [LARGE SCALE GENOMIC DNA]</scope>
    <source>
        <strain>K12 / W3110 / ATCC 27325 / DSM 5911</strain>
    </source>
</reference>
<reference key="5">
    <citation type="journal article" date="1980" name="Nucleic Acids Res.">
        <title>Nucleotide sequence of the E coli gene coding for dihydrofolate reductase.</title>
        <authorList>
            <person name="Smith D.R."/>
            <person name="Calvo J.M."/>
        </authorList>
    </citation>
    <scope>NUCLEOTIDE SEQUENCE [GENOMIC DNA] OF 500-620</scope>
    <source>
        <strain>K12</strain>
    </source>
</reference>
<reference key="6">
    <citation type="journal article" date="1992" name="FEMS Microbiol. Lett.">
        <title>The putative Na+/H+ antiporter (NapA) of Enterococcus hirae is homologous to the putative K+/H+ antiporter (KefC) of Escherichia coli.</title>
        <authorList>
            <person name="Reizer J."/>
            <person name="Reizer A."/>
            <person name="Saier M.H. Jr."/>
        </authorList>
    </citation>
    <scope>SIMILARITY TO NAPA</scope>
</reference>
<reference key="7">
    <citation type="journal article" date="1997" name="J. Bacteriol.">
        <title>Survival during exposure to the electrophilic reagent N-ethylmaleimide in Escherichia coli: role of KefB and KefC potassium channels.</title>
        <authorList>
            <person name="Ferguson G.P."/>
            <person name="Nikolaev Y."/>
            <person name="McLaggan D."/>
            <person name="Maclean M."/>
            <person name="Booth I.R."/>
        </authorList>
    </citation>
    <scope>FUNCTION</scope>
    <scope>ACTIVITY REGULATION</scope>
    <source>
        <strain>K12</strain>
    </source>
</reference>
<reference key="8">
    <citation type="journal article" date="2005" name="Science">
        <title>Global topology analysis of the Escherichia coli inner membrane proteome.</title>
        <authorList>
            <person name="Daley D.O."/>
            <person name="Rapp M."/>
            <person name="Granseth E."/>
            <person name="Melen K."/>
            <person name="Drew D."/>
            <person name="von Heijne G."/>
        </authorList>
    </citation>
    <scope>TOPOLOGY [LARGE SCALE ANALYSIS]</scope>
    <scope>SUBCELLULAR LOCATION</scope>
    <source>
        <strain>K12 / MG1655 / ATCC 47076</strain>
    </source>
</reference>
<reference key="9">
    <citation type="journal article" date="2007" name="Proc. Natl. Acad. Sci. U.S.A.">
        <title>Three two-component transporters with channel-like properties have monovalent cation/proton antiport activity.</title>
        <authorList>
            <person name="Fujisawa M."/>
            <person name="Ito M."/>
            <person name="Krulwich T.A."/>
        </authorList>
    </citation>
    <scope>FUNCTION</scope>
    <scope>ACTIVITY REGULATION</scope>
    <scope>SUBUNIT</scope>
</reference>
<reference key="10">
    <citation type="journal article" date="2009" name="Structure">
        <title>KTN (RCK) domains regulate K+ channels and transporters by controlling the dimer-hinge conformation.</title>
        <authorList>
            <person name="Roosild T.P."/>
            <person name="Castronovo S."/>
            <person name="Miller S."/>
            <person name="Li C."/>
            <person name="Rasmussen T."/>
            <person name="Bartlett W."/>
            <person name="Gunasekera B."/>
            <person name="Choe S."/>
            <person name="Booth I.R."/>
        </authorList>
    </citation>
    <scope>X-RAY CRYSTALLOGRAPHY (2.40 ANGSTROMS) OF 401-620 IN COMPLEX WITH KEFF AND AMP</scope>
    <scope>SUBUNIT</scope>
    <scope>INTERACTION WITH KEFF</scope>
    <scope>MUTAGENESIS OF ASP-264; ARG-416; GLU-520; ALA-522; GLY-526 AND ASN-551</scope>
    <scope>IDENTIFICATION BY MASS SPECTROMETRY</scope>
</reference>
<reference key="11">
    <citation type="journal article" date="2010" name="Proc. Natl. Acad. Sci. U.S.A.">
        <title>Mechanism of ligand-gated potassium efflux in bacterial pathogens.</title>
        <authorList>
            <person name="Roosild T.P."/>
            <person name="Castronovo S."/>
            <person name="Healy J."/>
            <person name="Miller S."/>
            <person name="Pliotas C."/>
            <person name="Rasmussen T."/>
            <person name="Bartlett W."/>
            <person name="Conway S.J."/>
            <person name="Booth I.R."/>
        </authorList>
    </citation>
    <scope>X-RAY CRYSTALLOGRAPHY (1.75 ANGSTROMS) OF 401-620 IN COMPLEXES WITH KEFF; AMP AND GLUTATHIONE</scope>
    <scope>FUNCTION</scope>
    <scope>SUBUNIT</scope>
    <scope>INTERACTION WITH KEFF</scope>
    <scope>ACTIVITY REGULATION</scope>
    <scope>DOMAIN</scope>
    <scope>MUTAGENESIS OF GLN-412; ARG-416; PHE-441; ASP-499; ARG-516 AND ASN-551</scope>
</reference>
<evidence type="ECO:0000255" key="1"/>
<evidence type="ECO:0000255" key="2">
    <source>
        <dbReference type="HAMAP-Rule" id="MF_01413"/>
    </source>
</evidence>
<evidence type="ECO:0000255" key="3">
    <source>
        <dbReference type="PROSITE-ProRule" id="PRU00543"/>
    </source>
</evidence>
<evidence type="ECO:0000256" key="4">
    <source>
        <dbReference type="SAM" id="MobiDB-lite"/>
    </source>
</evidence>
<evidence type="ECO:0000269" key="5">
    <source>
    </source>
</evidence>
<evidence type="ECO:0000269" key="6">
    <source>
    </source>
</evidence>
<evidence type="ECO:0000269" key="7">
    <source>
    </source>
</evidence>
<evidence type="ECO:0000269" key="8">
    <source>
    </source>
</evidence>
<evidence type="ECO:0000269" key="9">
    <source>
    </source>
</evidence>
<evidence type="ECO:0000269" key="10">
    <source>
    </source>
</evidence>
<evidence type="ECO:0000305" key="11">
    <source>
    </source>
</evidence>
<evidence type="ECO:0007829" key="12">
    <source>
        <dbReference type="PDB" id="3L9W"/>
    </source>
</evidence>
<evidence type="ECO:0007829" key="13">
    <source>
        <dbReference type="PDB" id="8BXG"/>
    </source>
</evidence>
<evidence type="ECO:0007829" key="14">
    <source>
        <dbReference type="PDB" id="8BY2"/>
    </source>
</evidence>
<evidence type="ECO:0007829" key="15">
    <source>
        <dbReference type="PDB" id="9EMB"/>
    </source>
</evidence>
<proteinExistence type="evidence at protein level"/>
<feature type="chain" id="PRO_0000196606" description="Glutathione-regulated potassium-efflux system protein KefC">
    <location>
        <begin position="1"/>
        <end position="620"/>
    </location>
</feature>
<feature type="topological domain" description="Periplasmic" evidence="1">
    <location>
        <begin position="1"/>
        <end position="3"/>
    </location>
</feature>
<feature type="transmembrane region" description="Helical" evidence="2">
    <location>
        <begin position="4"/>
        <end position="24"/>
    </location>
</feature>
<feature type="topological domain" description="Cytoplasmic" evidence="1">
    <location>
        <position position="25"/>
    </location>
</feature>
<feature type="transmembrane region" description="Helical" evidence="2">
    <location>
        <begin position="26"/>
        <end position="46"/>
    </location>
</feature>
<feature type="topological domain" description="Periplasmic" evidence="1">
    <location>
        <begin position="47"/>
        <end position="53"/>
    </location>
</feature>
<feature type="transmembrane region" description="Helical" evidence="2">
    <location>
        <begin position="54"/>
        <end position="74"/>
    </location>
</feature>
<feature type="topological domain" description="Cytoplasmic" evidence="1">
    <location>
        <begin position="75"/>
        <end position="89"/>
    </location>
</feature>
<feature type="transmembrane region" description="Helical" evidence="2">
    <location>
        <begin position="90"/>
        <end position="110"/>
    </location>
</feature>
<feature type="topological domain" description="Periplasmic" evidence="1">
    <location>
        <begin position="111"/>
        <end position="113"/>
    </location>
</feature>
<feature type="transmembrane region" description="Helical" evidence="2">
    <location>
        <begin position="114"/>
        <end position="134"/>
    </location>
</feature>
<feature type="topological domain" description="Cytoplasmic" evidence="1">
    <location>
        <begin position="135"/>
        <end position="148"/>
    </location>
</feature>
<feature type="transmembrane region" description="Helical" evidence="2">
    <location>
        <begin position="149"/>
        <end position="169"/>
    </location>
</feature>
<feature type="topological domain" description="Periplasmic" evidence="1">
    <location>
        <begin position="170"/>
        <end position="177"/>
    </location>
</feature>
<feature type="transmembrane region" description="Helical" evidence="2">
    <location>
        <begin position="178"/>
        <end position="198"/>
    </location>
</feature>
<feature type="topological domain" description="Cytoplasmic" evidence="1">
    <location>
        <begin position="199"/>
        <end position="213"/>
    </location>
</feature>
<feature type="transmembrane region" description="Helical" evidence="2">
    <location>
        <begin position="214"/>
        <end position="233"/>
    </location>
</feature>
<feature type="topological domain" description="Periplasmic" evidence="1">
    <location>
        <begin position="234"/>
        <end position="236"/>
    </location>
</feature>
<feature type="transmembrane region" description="Helical" evidence="2">
    <location>
        <begin position="237"/>
        <end position="254"/>
    </location>
</feature>
<feature type="topological domain" description="Cytoplasmic" evidence="1">
    <location>
        <begin position="255"/>
        <end position="269"/>
    </location>
</feature>
<feature type="transmembrane region" description="Helical" evidence="2">
    <location>
        <begin position="270"/>
        <end position="290"/>
    </location>
</feature>
<feature type="topological domain" description="Periplasmic" evidence="1">
    <location>
        <begin position="291"/>
        <end position="293"/>
    </location>
</feature>
<feature type="transmembrane region" description="Helical" evidence="2">
    <location>
        <begin position="294"/>
        <end position="314"/>
    </location>
</feature>
<feature type="topological domain" description="Cytoplasmic" evidence="1">
    <location>
        <begin position="315"/>
        <end position="326"/>
    </location>
</feature>
<feature type="transmembrane region" description="Helical" evidence="2">
    <location>
        <begin position="327"/>
        <end position="347"/>
    </location>
</feature>
<feature type="topological domain" description="Periplasmic" evidence="1">
    <location>
        <begin position="348"/>
        <end position="358"/>
    </location>
</feature>
<feature type="transmembrane region" description="Helical" evidence="2">
    <location>
        <begin position="359"/>
        <end position="379"/>
    </location>
</feature>
<feature type="topological domain" description="Cytoplasmic" evidence="11">
    <location>
        <begin position="380"/>
        <end position="620"/>
    </location>
</feature>
<feature type="domain" description="RCK N-terminal" evidence="3">
    <location>
        <begin position="399"/>
        <end position="518"/>
    </location>
</feature>
<feature type="region of interest" description="Important for the regulation of potassium conductance">
    <location>
        <begin position="259"/>
        <end position="267"/>
    </location>
</feature>
<feature type="region of interest" description="Disordered" evidence="4">
    <location>
        <begin position="597"/>
        <end position="620"/>
    </location>
</feature>
<feature type="binding site" evidence="7">
    <location>
        <begin position="408"/>
        <end position="410"/>
    </location>
    <ligand>
        <name>AMP</name>
        <dbReference type="ChEBI" id="CHEBI:456215"/>
    </ligand>
</feature>
<feature type="binding site">
    <location>
        <position position="412"/>
    </location>
    <ligand>
        <name>glutathione</name>
        <dbReference type="ChEBI" id="CHEBI:57925"/>
        <note>ligand shared between dimeric partners</note>
    </ligand>
</feature>
<feature type="binding site" evidence="7">
    <location>
        <begin position="429"/>
        <end position="430"/>
    </location>
    <ligand>
        <name>AMP</name>
        <dbReference type="ChEBI" id="CHEBI:456215"/>
    </ligand>
</feature>
<feature type="binding site" evidence="7">
    <location>
        <position position="434"/>
    </location>
    <ligand>
        <name>AMP</name>
        <dbReference type="ChEBI" id="CHEBI:456215"/>
    </ligand>
</feature>
<feature type="binding site" evidence="7">
    <location>
        <begin position="449"/>
        <end position="450"/>
    </location>
    <ligand>
        <name>AMP</name>
        <dbReference type="ChEBI" id="CHEBI:456215"/>
    </ligand>
</feature>
<feature type="binding site" evidence="7">
    <location>
        <position position="472"/>
    </location>
    <ligand>
        <name>AMP</name>
        <dbReference type="ChEBI" id="CHEBI:456215"/>
    </ligand>
</feature>
<feature type="binding site" evidence="7">
    <location>
        <position position="496"/>
    </location>
    <ligand>
        <name>AMP</name>
        <dbReference type="ChEBI" id="CHEBI:456215"/>
    </ligand>
</feature>
<feature type="binding site" description="in other chain">
    <location>
        <begin position="498"/>
        <end position="500"/>
    </location>
    <ligand>
        <name>glutathione</name>
        <dbReference type="ChEBI" id="CHEBI:57925"/>
        <note>ligand shared between dimeric partners</note>
    </ligand>
</feature>
<feature type="binding site" description="in other chain">
    <location>
        <position position="516"/>
    </location>
    <ligand>
        <name>glutathione</name>
        <dbReference type="ChEBI" id="CHEBI:57925"/>
        <note>ligand shared between dimeric partners</note>
    </ligand>
</feature>
<feature type="mutagenesis site" description="Increases potassium efflux in the absence of glutathione, but not in the presence of glutathione. Increases constitutive potassium efflux; when associated with D-551.">
    <original>E</original>
    <variation>K</variation>
    <location>
        <position position="262"/>
    </location>
</feature>
<feature type="mutagenesis site" description="Increases constitutive potassium efflux." evidence="7">
    <original>D</original>
    <variation>A</variation>
    <location>
        <position position="264"/>
    </location>
</feature>
<feature type="mutagenesis site" description="Increases constitutive potassium efflux and reduces glutathione-mediated inhibition of potassium efflux." evidence="9">
    <original>Q</original>
    <variation>A</variation>
    <location>
        <position position="412"/>
    </location>
</feature>
<feature type="mutagenesis site" description="Increases constitutive potassium efflux and abolishes regulation of potassium efflux by glutathione and glutathione adducts." evidence="9">
    <original>Q</original>
    <variation>K</variation>
    <location>
        <position position="412"/>
    </location>
</feature>
<feature type="mutagenesis site" description="Increases constitutive potassium efflux and abolishes regulation of potassium efflux by glutathione and glutathione adducts; when associated with A-516 and A-551." evidence="7 9">
    <original>R</original>
    <variation>A</variation>
    <location>
        <position position="416"/>
    </location>
</feature>
<feature type="mutagenesis site" description="Increased constitutive potassium efflux." evidence="7 9">
    <original>R</original>
    <variation>S</variation>
    <location>
        <position position="416"/>
    </location>
</feature>
<feature type="mutagenesis site" description="Reduced activation of potassium efflux by glutathione adducts." evidence="9">
    <original>F</original>
    <variation>D</variation>
    <variation>L</variation>
    <location>
        <position position="441"/>
    </location>
</feature>
<feature type="mutagenesis site" description="No effect on activation of potassium efflux by glutathione adducts." evidence="9">
    <original>F</original>
    <variation>W</variation>
    <variation>Y</variation>
    <location>
        <position position="441"/>
    </location>
</feature>
<feature type="mutagenesis site" description="Strongly reduced activation of potassium efflux by glutathione adducts." evidence="9">
    <original>D</original>
    <variation>A</variation>
    <location>
        <position position="499"/>
    </location>
</feature>
<feature type="mutagenesis site" description="Mildly reduced activation of potassium efflux by glutathione adducts." evidence="9">
    <original>D</original>
    <variation>G</variation>
    <location>
        <position position="499"/>
    </location>
</feature>
<feature type="mutagenesis site" description="No effect on potassium efflux." evidence="9">
    <original>D</original>
    <variation>S</variation>
    <location>
        <position position="499"/>
    </location>
</feature>
<feature type="mutagenesis site" description="Increases constitutive potassium efflux and abolishes regulation of potassium efflux by glutathione and glutathione adducts; when associated with A-416 and A-551." evidence="9">
    <original>R</original>
    <variation>A</variation>
    <location>
        <position position="516"/>
    </location>
</feature>
<feature type="mutagenesis site" description="Strongly reduced potassium efflux." evidence="7">
    <original>E</original>
    <variation>G</variation>
    <location>
        <position position="520"/>
    </location>
</feature>
<feature type="mutagenesis site" description="Strongly reduced potassium efflux." evidence="7">
    <original>A</original>
    <variation>V</variation>
    <location>
        <position position="522"/>
    </location>
</feature>
<feature type="mutagenesis site" description="Strongly reduced potassium efflux." evidence="7">
    <original>G</original>
    <variation>V</variation>
    <location>
        <position position="526"/>
    </location>
</feature>
<feature type="mutagenesis site" description="Increases constitutive potassium efflux and abolishes regulation of potassium efflux by glutathione and glutathione adducts; when associated with A-416 and A-516." evidence="7 9">
    <original>N</original>
    <variation>A</variation>
    <location>
        <position position="551"/>
    </location>
</feature>
<feature type="mutagenesis site" description="Increases constitutive potassium efflux; when associated with K-262." evidence="7 9">
    <original>N</original>
    <variation>D</variation>
    <location>
        <position position="551"/>
    </location>
</feature>
<feature type="helix" evidence="15">
    <location>
        <begin position="3"/>
        <end position="25"/>
    </location>
</feature>
<feature type="turn" evidence="14">
    <location>
        <begin position="26"/>
        <end position="28"/>
    </location>
</feature>
<feature type="helix" evidence="15">
    <location>
        <begin position="30"/>
        <end position="40"/>
    </location>
</feature>
<feature type="strand" evidence="15">
    <location>
        <begin position="42"/>
        <end position="46"/>
    </location>
</feature>
<feature type="helix" evidence="15">
    <location>
        <begin position="52"/>
        <end position="71"/>
    </location>
</feature>
<feature type="helix" evidence="15">
    <location>
        <begin position="76"/>
        <end position="81"/>
    </location>
</feature>
<feature type="helix" evidence="15">
    <location>
        <begin position="83"/>
        <end position="96"/>
    </location>
</feature>
<feature type="turn" evidence="15">
    <location>
        <begin position="97"/>
        <end position="101"/>
    </location>
</feature>
<feature type="helix" evidence="15">
    <location>
        <begin position="102"/>
        <end position="108"/>
    </location>
</feature>
<feature type="helix" evidence="15">
    <location>
        <begin position="112"/>
        <end position="122"/>
    </location>
</feature>
<feature type="helix" evidence="15">
    <location>
        <begin position="127"/>
        <end position="136"/>
    </location>
</feature>
<feature type="helix" evidence="15">
    <location>
        <begin position="143"/>
        <end position="164"/>
    </location>
</feature>
<feature type="helix" evidence="15">
    <location>
        <begin position="166"/>
        <end position="170"/>
    </location>
</feature>
<feature type="strand" evidence="13">
    <location>
        <begin position="173"/>
        <end position="175"/>
    </location>
</feature>
<feature type="helix" evidence="15">
    <location>
        <begin position="176"/>
        <end position="182"/>
    </location>
</feature>
<feature type="turn" evidence="15">
    <location>
        <begin position="183"/>
        <end position="185"/>
    </location>
</feature>
<feature type="helix" evidence="15">
    <location>
        <begin position="186"/>
        <end position="200"/>
    </location>
</feature>
<feature type="turn" evidence="15">
    <location>
        <begin position="201"/>
        <end position="203"/>
    </location>
</feature>
<feature type="helix" evidence="15">
    <location>
        <begin position="204"/>
        <end position="212"/>
    </location>
</feature>
<feature type="helix" evidence="15">
    <location>
        <begin position="218"/>
        <end position="237"/>
    </location>
</feature>
<feature type="helix" evidence="15">
    <location>
        <begin position="241"/>
        <end position="254"/>
    </location>
</feature>
<feature type="helix" evidence="15">
    <location>
        <begin position="258"/>
        <end position="265"/>
    </location>
</feature>
<feature type="helix" evidence="15">
    <location>
        <begin position="266"/>
        <end position="268"/>
    </location>
</feature>
<feature type="helix" evidence="15">
    <location>
        <begin position="269"/>
        <end position="283"/>
    </location>
</feature>
<feature type="helix" evidence="15">
    <location>
        <begin position="287"/>
        <end position="291"/>
    </location>
</feature>
<feature type="helix" evidence="15">
    <location>
        <begin position="294"/>
        <end position="314"/>
    </location>
</feature>
<feature type="turn" evidence="15">
    <location>
        <begin position="315"/>
        <end position="319"/>
    </location>
</feature>
<feature type="turn" evidence="15">
    <location>
        <begin position="322"/>
        <end position="324"/>
    </location>
</feature>
<feature type="helix" evidence="15">
    <location>
        <begin position="325"/>
        <end position="332"/>
    </location>
</feature>
<feature type="helix" evidence="15">
    <location>
        <begin position="338"/>
        <end position="348"/>
    </location>
</feature>
<feature type="strand" evidence="14">
    <location>
        <begin position="350"/>
        <end position="352"/>
    </location>
</feature>
<feature type="helix" evidence="15">
    <location>
        <begin position="354"/>
        <end position="368"/>
    </location>
</feature>
<feature type="helix" evidence="15">
    <location>
        <begin position="371"/>
        <end position="384"/>
    </location>
</feature>
<feature type="strand" evidence="12">
    <location>
        <begin position="401"/>
        <end position="405"/>
    </location>
</feature>
<feature type="helix" evidence="12">
    <location>
        <begin position="409"/>
        <end position="420"/>
    </location>
</feature>
<feature type="strand" evidence="12">
    <location>
        <begin position="425"/>
        <end position="429"/>
    </location>
</feature>
<feature type="helix" evidence="12">
    <location>
        <begin position="432"/>
        <end position="440"/>
    </location>
</feature>
<feature type="strand" evidence="12">
    <location>
        <begin position="446"/>
        <end position="448"/>
    </location>
</feature>
<feature type="helix" evidence="12">
    <location>
        <begin position="453"/>
        <end position="458"/>
    </location>
</feature>
<feature type="turn" evidence="12">
    <location>
        <begin position="459"/>
        <end position="463"/>
    </location>
</feature>
<feature type="strand" evidence="12">
    <location>
        <begin position="465"/>
        <end position="469"/>
    </location>
</feature>
<feature type="helix" evidence="12">
    <location>
        <begin position="474"/>
        <end position="487"/>
    </location>
</feature>
<feature type="strand" evidence="12">
    <location>
        <begin position="492"/>
        <end position="499"/>
    </location>
</feature>
<feature type="helix" evidence="12">
    <location>
        <begin position="500"/>
        <end position="508"/>
    </location>
</feature>
<feature type="helix" evidence="12">
    <location>
        <begin position="519"/>
        <end position="532"/>
    </location>
</feature>
<feature type="helix" evidence="12">
    <location>
        <begin position="537"/>
        <end position="560"/>
    </location>
</feature>
<feature type="helix" evidence="12">
    <location>
        <begin position="565"/>
        <end position="579"/>
    </location>
</feature>
<organism>
    <name type="scientific">Escherichia coli (strain K12)</name>
    <dbReference type="NCBI Taxonomy" id="83333"/>
    <lineage>
        <taxon>Bacteria</taxon>
        <taxon>Pseudomonadati</taxon>
        <taxon>Pseudomonadota</taxon>
        <taxon>Gammaproteobacteria</taxon>
        <taxon>Enterobacterales</taxon>
        <taxon>Enterobacteriaceae</taxon>
        <taxon>Escherichia</taxon>
    </lineage>
</organism>
<keyword id="KW-0002">3D-structure</keyword>
<keyword id="KW-0050">Antiport</keyword>
<keyword id="KW-0997">Cell inner membrane</keyword>
<keyword id="KW-1003">Cell membrane</keyword>
<keyword id="KW-0406">Ion transport</keyword>
<keyword id="KW-0472">Membrane</keyword>
<keyword id="KW-0547">Nucleotide-binding</keyword>
<keyword id="KW-0630">Potassium</keyword>
<keyword id="KW-0633">Potassium transport</keyword>
<keyword id="KW-1185">Reference proteome</keyword>
<keyword id="KW-0812">Transmembrane</keyword>
<keyword id="KW-1133">Transmembrane helix</keyword>
<keyword id="KW-0813">Transport</keyword>
<sequence>MDSHTLIQALIYLGSAALIVPIAVRLGLGSVLGYLIAGCIIGPWGLRLVTDAESILHFAEIGVVLMLFIIGLELDPQRLWKLRAAVFGCGALQMVICGGLLGLFCMLLGLRWQVAELIGMTLALSSTAIAMQAMNERNLMVTQMGRSAFAVLLFQDIAAIPLVAMIPLLATSSASTTMGAFALSALKVAGALVLVVLLGRYVTRPALRFVARSGLREVFSAVALFLVFGFGLLLEEVGLSMAMGAFLAGVLLASSEYRHALESDIEPFKGLLLGLFFIGVGMSIDFGTLLENPLRIVILLLGFLIIKIAMLWLIARPLQVPNKQRRWFAVLLGQGSEFAFVVFGAAQMANVLEPEWAKSLTLAVALSMAATPILLVILNRLEQSSTEEAREADEIDEEQPRVIIAGFGRFGQITGRLLLSSGVKMVVLDHDPDHIETLRKFGMKVFYGDATRMDLLESAGAAKAEVLINAIDDPQTNLQLTEMVKEHFPHLQIIARARDVDHYIRLRQAGVEKPERETFEGALKTGRLALESLGLGPYEARERADVFRRFNIQMVEEMAMVENDTKARAAVYKRTSAMLSEIITEDREHLSLIQRHGWQGTEEGKHTGNMADEPETKPSS</sequence>
<accession>P03819</accession>
<name>KEFC_ECOLI</name>